<evidence type="ECO:0000255" key="1">
    <source>
        <dbReference type="HAMAP-Rule" id="MF_00715"/>
    </source>
</evidence>
<proteinExistence type="inferred from homology"/>
<organism>
    <name type="scientific">Vibrio cholerae serotype O1 (strain ATCC 39541 / Classical Ogawa 395 / O395)</name>
    <dbReference type="NCBI Taxonomy" id="345073"/>
    <lineage>
        <taxon>Bacteria</taxon>
        <taxon>Pseudomonadati</taxon>
        <taxon>Pseudomonadota</taxon>
        <taxon>Gammaproteobacteria</taxon>
        <taxon>Vibrionales</taxon>
        <taxon>Vibrionaceae</taxon>
        <taxon>Vibrio</taxon>
    </lineage>
</organism>
<feature type="chain" id="PRO_1000072774" description="Protein SlyX homolog">
    <location>
        <begin position="1"/>
        <end position="72"/>
    </location>
</feature>
<comment type="similarity">
    <text evidence="1">Belongs to the SlyX family.</text>
</comment>
<reference key="1">
    <citation type="submission" date="2007-03" db="EMBL/GenBank/DDBJ databases">
        <authorList>
            <person name="Heidelberg J."/>
        </authorList>
    </citation>
    <scope>NUCLEOTIDE SEQUENCE [LARGE SCALE GENOMIC DNA]</scope>
    <source>
        <strain>ATCC 39541 / Classical Ogawa 395 / O395</strain>
    </source>
</reference>
<reference key="2">
    <citation type="journal article" date="2008" name="PLoS ONE">
        <title>A recalibrated molecular clock and independent origins for the cholera pandemic clones.</title>
        <authorList>
            <person name="Feng L."/>
            <person name="Reeves P.R."/>
            <person name="Lan R."/>
            <person name="Ren Y."/>
            <person name="Gao C."/>
            <person name="Zhou Z."/>
            <person name="Ren Y."/>
            <person name="Cheng J."/>
            <person name="Wang W."/>
            <person name="Wang J."/>
            <person name="Qian W."/>
            <person name="Li D."/>
            <person name="Wang L."/>
        </authorList>
    </citation>
    <scope>NUCLEOTIDE SEQUENCE [LARGE SCALE GENOMIC DNA]</scope>
    <source>
        <strain>ATCC 39541 / Classical Ogawa 395 / O395</strain>
    </source>
</reference>
<gene>
    <name evidence="1" type="primary">slyX</name>
    <name type="ordered locus">VC0395_A2763</name>
    <name type="ordered locus">VC395_0395</name>
</gene>
<accession>A5F3M2</accession>
<accession>C3M4E6</accession>
<sequence>MSLTQLQERIEDLECKLAFQEQTIETLNDALTQQQLLLSKMQDQMKYVVGKVKNMDTSTLADPAHETPPPHY</sequence>
<dbReference type="EMBL" id="CP000627">
    <property type="protein sequence ID" value="ABQ21705.1"/>
    <property type="molecule type" value="Genomic_DNA"/>
</dbReference>
<dbReference type="EMBL" id="CP001235">
    <property type="protein sequence ID" value="ACP08418.1"/>
    <property type="molecule type" value="Genomic_DNA"/>
</dbReference>
<dbReference type="RefSeq" id="WP_001890311.1">
    <property type="nucleotide sequence ID" value="NZ_JAACZH010000038.1"/>
</dbReference>
<dbReference type="SMR" id="A5F3M2"/>
<dbReference type="KEGG" id="vco:VC0395_A2763"/>
<dbReference type="KEGG" id="vcr:VC395_0395"/>
<dbReference type="PATRIC" id="fig|345073.21.peg.384"/>
<dbReference type="eggNOG" id="COG2900">
    <property type="taxonomic scope" value="Bacteria"/>
</dbReference>
<dbReference type="HOGENOM" id="CLU_180796_4_0_6"/>
<dbReference type="Proteomes" id="UP000000249">
    <property type="component" value="Chromosome 2"/>
</dbReference>
<dbReference type="Gene3D" id="1.20.5.300">
    <property type="match status" value="1"/>
</dbReference>
<dbReference type="HAMAP" id="MF_00715">
    <property type="entry name" value="SlyX"/>
    <property type="match status" value="1"/>
</dbReference>
<dbReference type="InterPro" id="IPR007236">
    <property type="entry name" value="SlyX"/>
</dbReference>
<dbReference type="NCBIfam" id="NF003357">
    <property type="entry name" value="PRK04406.1"/>
    <property type="match status" value="1"/>
</dbReference>
<dbReference type="PANTHER" id="PTHR36508">
    <property type="entry name" value="PROTEIN SLYX"/>
    <property type="match status" value="1"/>
</dbReference>
<dbReference type="PANTHER" id="PTHR36508:SF1">
    <property type="entry name" value="PROTEIN SLYX"/>
    <property type="match status" value="1"/>
</dbReference>
<dbReference type="Pfam" id="PF04102">
    <property type="entry name" value="SlyX"/>
    <property type="match status" value="1"/>
</dbReference>
<name>SLYX_VIBC3</name>
<protein>
    <recommendedName>
        <fullName evidence="1">Protein SlyX homolog</fullName>
    </recommendedName>
</protein>